<organism>
    <name type="scientific">Escherichia fergusonii (strain ATCC 35469 / DSM 13698 / CCUG 18766 / IAM 14443 / JCM 21226 / LMG 7866 / NBRC 102419 / NCTC 12128 / CDC 0568-73)</name>
    <dbReference type="NCBI Taxonomy" id="585054"/>
    <lineage>
        <taxon>Bacteria</taxon>
        <taxon>Pseudomonadati</taxon>
        <taxon>Pseudomonadota</taxon>
        <taxon>Gammaproteobacteria</taxon>
        <taxon>Enterobacterales</taxon>
        <taxon>Enterobacteriaceae</taxon>
        <taxon>Escherichia</taxon>
    </lineage>
</organism>
<name>AC4CH_ESCF3</name>
<dbReference type="EC" id="3.5.1.135" evidence="2"/>
<dbReference type="EMBL" id="CU928158">
    <property type="protein sequence ID" value="CAQ90330.1"/>
    <property type="molecule type" value="Genomic_DNA"/>
</dbReference>
<dbReference type="RefSeq" id="WP_001182961.1">
    <property type="nucleotide sequence ID" value="NC_011740.1"/>
</dbReference>
<dbReference type="SMR" id="B7LPB4"/>
<dbReference type="GeneID" id="75060544"/>
<dbReference type="KEGG" id="efe:EFER_2836"/>
<dbReference type="HOGENOM" id="CLU_152586_0_0_6"/>
<dbReference type="OrthoDB" id="8590202at2"/>
<dbReference type="Proteomes" id="UP000000745">
    <property type="component" value="Chromosome"/>
</dbReference>
<dbReference type="GO" id="GO:0005829">
    <property type="term" value="C:cytosol"/>
    <property type="evidence" value="ECO:0007669"/>
    <property type="project" value="TreeGrafter"/>
</dbReference>
<dbReference type="GO" id="GO:0016813">
    <property type="term" value="F:hydrolase activity, acting on carbon-nitrogen (but not peptide) bonds, in linear amidines"/>
    <property type="evidence" value="ECO:0007669"/>
    <property type="project" value="UniProtKB-UniRule"/>
</dbReference>
<dbReference type="GO" id="GO:0106251">
    <property type="term" value="F:N4-acetylcytidine amidohydrolase activity"/>
    <property type="evidence" value="ECO:0007669"/>
    <property type="project" value="RHEA"/>
</dbReference>
<dbReference type="CDD" id="cd06552">
    <property type="entry name" value="ASCH_yqfb_like"/>
    <property type="match status" value="1"/>
</dbReference>
<dbReference type="FunFam" id="2.30.130.30:FF:000001">
    <property type="entry name" value="UPF0267 protein YqfB"/>
    <property type="match status" value="1"/>
</dbReference>
<dbReference type="Gene3D" id="2.30.130.30">
    <property type="entry name" value="Hypothetical protein"/>
    <property type="match status" value="1"/>
</dbReference>
<dbReference type="HAMAP" id="MF_00684">
    <property type="entry name" value="ac4C_amidohydr"/>
    <property type="match status" value="1"/>
</dbReference>
<dbReference type="InterPro" id="IPR008314">
    <property type="entry name" value="AC4CH"/>
</dbReference>
<dbReference type="InterPro" id="IPR007374">
    <property type="entry name" value="ASCH_domain"/>
</dbReference>
<dbReference type="InterPro" id="IPR015947">
    <property type="entry name" value="PUA-like_sf"/>
</dbReference>
<dbReference type="NCBIfam" id="NF003443">
    <property type="entry name" value="PRK04980.1"/>
    <property type="match status" value="1"/>
</dbReference>
<dbReference type="PANTHER" id="PTHR38088">
    <property type="entry name" value="UCP029143 FAMILY PROTEIN"/>
    <property type="match status" value="1"/>
</dbReference>
<dbReference type="PANTHER" id="PTHR38088:SF2">
    <property type="entry name" value="UCP029143 FAMILY PROTEIN"/>
    <property type="match status" value="1"/>
</dbReference>
<dbReference type="Pfam" id="PF04266">
    <property type="entry name" value="ASCH"/>
    <property type="match status" value="1"/>
</dbReference>
<dbReference type="PIRSF" id="PIRSF029143">
    <property type="entry name" value="UCP029143"/>
    <property type="match status" value="1"/>
</dbReference>
<dbReference type="SMART" id="SM01022">
    <property type="entry name" value="ASCH"/>
    <property type="match status" value="1"/>
</dbReference>
<dbReference type="SUPFAM" id="SSF88697">
    <property type="entry name" value="PUA domain-like"/>
    <property type="match status" value="1"/>
</dbReference>
<evidence type="ECO:0000255" key="1"/>
<evidence type="ECO:0000255" key="2">
    <source>
        <dbReference type="HAMAP-Rule" id="MF_00684"/>
    </source>
</evidence>
<keyword id="KW-0378">Hydrolase</keyword>
<protein>
    <recommendedName>
        <fullName evidence="2">N(4)-acetylcytidine amidohydrolase</fullName>
        <shortName evidence="2">ac4C amidohydrolase</shortName>
        <ecNumber evidence="2">3.5.1.135</ecNumber>
    </recommendedName>
</protein>
<comment type="function">
    <text evidence="2">Catalyzes the hydrolysis of N(4)-acetylcytidine (ac4C).</text>
</comment>
<comment type="catalytic activity">
    <reaction evidence="2">
        <text>N(4)-acetylcytidine + H2O = cytidine + acetate + H(+)</text>
        <dbReference type="Rhea" id="RHEA:62932"/>
        <dbReference type="ChEBI" id="CHEBI:15377"/>
        <dbReference type="ChEBI" id="CHEBI:15378"/>
        <dbReference type="ChEBI" id="CHEBI:17562"/>
        <dbReference type="ChEBI" id="CHEBI:30089"/>
        <dbReference type="ChEBI" id="CHEBI:70989"/>
        <dbReference type="EC" id="3.5.1.135"/>
    </reaction>
</comment>
<comment type="catalytic activity">
    <reaction evidence="2">
        <text>N(4)-acetyl-2'-deoxycytidine + H2O = 2'-deoxycytidine + acetate + H(+)</text>
        <dbReference type="Rhea" id="RHEA:62936"/>
        <dbReference type="ChEBI" id="CHEBI:15377"/>
        <dbReference type="ChEBI" id="CHEBI:15378"/>
        <dbReference type="ChEBI" id="CHEBI:15698"/>
        <dbReference type="ChEBI" id="CHEBI:30089"/>
        <dbReference type="ChEBI" id="CHEBI:146133"/>
        <dbReference type="EC" id="3.5.1.135"/>
    </reaction>
</comment>
<comment type="catalytic activity">
    <reaction evidence="2">
        <text>N(4)-acetylcytosine + H2O = cytosine + acetate + H(+)</text>
        <dbReference type="Rhea" id="RHEA:62940"/>
        <dbReference type="ChEBI" id="CHEBI:15377"/>
        <dbReference type="ChEBI" id="CHEBI:15378"/>
        <dbReference type="ChEBI" id="CHEBI:16040"/>
        <dbReference type="ChEBI" id="CHEBI:30089"/>
        <dbReference type="ChEBI" id="CHEBI:146134"/>
        <dbReference type="EC" id="3.5.1.135"/>
    </reaction>
</comment>
<comment type="similarity">
    <text evidence="2">Belongs to the N(4)-acetylcytidine amidohydrolase family.</text>
</comment>
<sequence length="103" mass="11900">MQPNDITFFQRFQDDILAGRKTITIRDESESHFKTGDVLRVGRFEDDGYFCTIEVTATSTVTLDTLTEKHAQQENMTLPELKKVIADIYPGQTQFYVIEFKCL</sequence>
<feature type="chain" id="PRO_1000131790" description="N(4)-acetylcytidine amidohydrolase">
    <location>
        <begin position="1"/>
        <end position="103"/>
    </location>
</feature>
<feature type="domain" description="ASCH" evidence="1">
    <location>
        <begin position="6"/>
        <end position="101"/>
    </location>
</feature>
<feature type="active site" description="Proton acceptor" evidence="2">
    <location>
        <position position="21"/>
    </location>
</feature>
<feature type="active site" description="Nucleophile" evidence="2">
    <location>
        <position position="24"/>
    </location>
</feature>
<feature type="active site" description="Proton donor" evidence="2">
    <location>
        <position position="74"/>
    </location>
</feature>
<accession>B7LPB4</accession>
<gene>
    <name type="primary">yqfB</name>
    <name type="ordered locus">EFER_2836</name>
</gene>
<reference key="1">
    <citation type="journal article" date="2009" name="PLoS Genet.">
        <title>Organised genome dynamics in the Escherichia coli species results in highly diverse adaptive paths.</title>
        <authorList>
            <person name="Touchon M."/>
            <person name="Hoede C."/>
            <person name="Tenaillon O."/>
            <person name="Barbe V."/>
            <person name="Baeriswyl S."/>
            <person name="Bidet P."/>
            <person name="Bingen E."/>
            <person name="Bonacorsi S."/>
            <person name="Bouchier C."/>
            <person name="Bouvet O."/>
            <person name="Calteau A."/>
            <person name="Chiapello H."/>
            <person name="Clermont O."/>
            <person name="Cruveiller S."/>
            <person name="Danchin A."/>
            <person name="Diard M."/>
            <person name="Dossat C."/>
            <person name="Karoui M.E."/>
            <person name="Frapy E."/>
            <person name="Garry L."/>
            <person name="Ghigo J.M."/>
            <person name="Gilles A.M."/>
            <person name="Johnson J."/>
            <person name="Le Bouguenec C."/>
            <person name="Lescat M."/>
            <person name="Mangenot S."/>
            <person name="Martinez-Jehanne V."/>
            <person name="Matic I."/>
            <person name="Nassif X."/>
            <person name="Oztas S."/>
            <person name="Petit M.A."/>
            <person name="Pichon C."/>
            <person name="Rouy Z."/>
            <person name="Ruf C.S."/>
            <person name="Schneider D."/>
            <person name="Tourret J."/>
            <person name="Vacherie B."/>
            <person name="Vallenet D."/>
            <person name="Medigue C."/>
            <person name="Rocha E.P.C."/>
            <person name="Denamur E."/>
        </authorList>
    </citation>
    <scope>NUCLEOTIDE SEQUENCE [LARGE SCALE GENOMIC DNA]</scope>
    <source>
        <strain>ATCC 35469 / DSM 13698 / BCRC 15582 / CCUG 18766 / IAM 14443 / JCM 21226 / LMG 7866 / NBRC 102419 / NCTC 12128 / CDC 0568-73</strain>
    </source>
</reference>
<proteinExistence type="inferred from homology"/>